<feature type="chain" id="PRO_1000078808" description="Bifunctional uridylyltransferase/uridylyl-removing enzyme">
    <location>
        <begin position="1"/>
        <end position="900"/>
    </location>
</feature>
<feature type="domain" description="HD" evidence="2">
    <location>
        <begin position="461"/>
        <end position="583"/>
    </location>
</feature>
<feature type="domain" description="ACT 1" evidence="1">
    <location>
        <begin position="706"/>
        <end position="784"/>
    </location>
</feature>
<feature type="domain" description="ACT 2" evidence="1">
    <location>
        <begin position="816"/>
        <end position="900"/>
    </location>
</feature>
<feature type="region of interest" description="Uridylyltransferase">
    <location>
        <begin position="1"/>
        <end position="342"/>
    </location>
</feature>
<feature type="region of interest" description="Uridylyl-removing">
    <location>
        <begin position="343"/>
        <end position="705"/>
    </location>
</feature>
<reference key="1">
    <citation type="submission" date="2008-01" db="EMBL/GenBank/DDBJ databases">
        <title>Complete sequence of Pseudomonas putida GB-1.</title>
        <authorList>
            <consortium name="US DOE Joint Genome Institute"/>
            <person name="Copeland A."/>
            <person name="Lucas S."/>
            <person name="Lapidus A."/>
            <person name="Barry K."/>
            <person name="Glavina del Rio T."/>
            <person name="Dalin E."/>
            <person name="Tice H."/>
            <person name="Pitluck S."/>
            <person name="Bruce D."/>
            <person name="Goodwin L."/>
            <person name="Chertkov O."/>
            <person name="Brettin T."/>
            <person name="Detter J.C."/>
            <person name="Han C."/>
            <person name="Kuske C.R."/>
            <person name="Schmutz J."/>
            <person name="Larimer F."/>
            <person name="Land M."/>
            <person name="Hauser L."/>
            <person name="Kyrpides N."/>
            <person name="Kim E."/>
            <person name="McCarthy J.K."/>
            <person name="Richardson P."/>
        </authorList>
    </citation>
    <scope>NUCLEOTIDE SEQUENCE [LARGE SCALE GENOMIC DNA]</scope>
    <source>
        <strain>GB-1</strain>
    </source>
</reference>
<protein>
    <recommendedName>
        <fullName evidence="1">Bifunctional uridylyltransferase/uridylyl-removing enzyme</fullName>
        <shortName evidence="1">UTase/UR</shortName>
    </recommendedName>
    <alternativeName>
        <fullName evidence="1">Bifunctional [protein-PII] modification enzyme</fullName>
    </alternativeName>
    <alternativeName>
        <fullName evidence="1">Bifunctional nitrogen sensor protein</fullName>
    </alternativeName>
    <domain>
        <recommendedName>
            <fullName evidence="1">[Protein-PII] uridylyltransferase</fullName>
            <shortName evidence="1">PII uridylyltransferase</shortName>
            <shortName evidence="1">UTase</shortName>
            <ecNumber evidence="1">2.7.7.59</ecNumber>
        </recommendedName>
    </domain>
    <domain>
        <recommendedName>
            <fullName evidence="1">[Protein-PII]-UMP uridylyl-removing enzyme</fullName>
            <shortName evidence="1">UR</shortName>
            <ecNumber evidence="1">3.1.4.-</ecNumber>
        </recommendedName>
    </domain>
</protein>
<dbReference type="EC" id="2.7.7.59" evidence="1"/>
<dbReference type="EC" id="3.1.4.-" evidence="1"/>
<dbReference type="EMBL" id="CP000926">
    <property type="protein sequence ID" value="ABY97052.1"/>
    <property type="molecule type" value="Genomic_DNA"/>
</dbReference>
<dbReference type="RefSeq" id="WP_012270832.1">
    <property type="nucleotide sequence ID" value="NC_010322.1"/>
</dbReference>
<dbReference type="SMR" id="B0KS97"/>
<dbReference type="KEGG" id="ppg:PputGB1_1144"/>
<dbReference type="eggNOG" id="COG2844">
    <property type="taxonomic scope" value="Bacteria"/>
</dbReference>
<dbReference type="HOGENOM" id="CLU_012833_0_0_6"/>
<dbReference type="Proteomes" id="UP000002157">
    <property type="component" value="Chromosome"/>
</dbReference>
<dbReference type="GO" id="GO:0008773">
    <property type="term" value="F:[protein-PII] uridylyltransferase activity"/>
    <property type="evidence" value="ECO:0007669"/>
    <property type="project" value="UniProtKB-UniRule"/>
</dbReference>
<dbReference type="GO" id="GO:0008081">
    <property type="term" value="F:phosphoric diester hydrolase activity"/>
    <property type="evidence" value="ECO:0007669"/>
    <property type="project" value="UniProtKB-UniRule"/>
</dbReference>
<dbReference type="GO" id="GO:0006808">
    <property type="term" value="P:regulation of nitrogen utilization"/>
    <property type="evidence" value="ECO:0007669"/>
    <property type="project" value="UniProtKB-UniRule"/>
</dbReference>
<dbReference type="CDD" id="cd04899">
    <property type="entry name" value="ACT_ACR-UUR-like_2"/>
    <property type="match status" value="1"/>
</dbReference>
<dbReference type="CDD" id="cd04900">
    <property type="entry name" value="ACT_UUR-like_1"/>
    <property type="match status" value="1"/>
</dbReference>
<dbReference type="CDD" id="cd00077">
    <property type="entry name" value="HDc"/>
    <property type="match status" value="1"/>
</dbReference>
<dbReference type="CDD" id="cd05401">
    <property type="entry name" value="NT_GlnE_GlnD_like"/>
    <property type="match status" value="1"/>
</dbReference>
<dbReference type="FunFam" id="1.10.3090.10:FF:000005">
    <property type="entry name" value="Bifunctional uridylyltransferase/uridylyl-removing enzyme"/>
    <property type="match status" value="1"/>
</dbReference>
<dbReference type="Gene3D" id="3.30.460.10">
    <property type="entry name" value="Beta Polymerase, domain 2"/>
    <property type="match status" value="1"/>
</dbReference>
<dbReference type="Gene3D" id="1.10.3090.10">
    <property type="entry name" value="cca-adding enzyme, domain 2"/>
    <property type="match status" value="1"/>
</dbReference>
<dbReference type="Gene3D" id="1.20.120.330">
    <property type="entry name" value="Nucleotidyltransferases domain 2"/>
    <property type="match status" value="1"/>
</dbReference>
<dbReference type="HAMAP" id="MF_00277">
    <property type="entry name" value="PII_uridylyl_transf"/>
    <property type="match status" value="1"/>
</dbReference>
<dbReference type="InterPro" id="IPR045865">
    <property type="entry name" value="ACT-like_dom_sf"/>
</dbReference>
<dbReference type="InterPro" id="IPR002912">
    <property type="entry name" value="ACT_dom"/>
</dbReference>
<dbReference type="InterPro" id="IPR003607">
    <property type="entry name" value="HD/PDEase_dom"/>
</dbReference>
<dbReference type="InterPro" id="IPR006674">
    <property type="entry name" value="HD_domain"/>
</dbReference>
<dbReference type="InterPro" id="IPR043519">
    <property type="entry name" value="NT_sf"/>
</dbReference>
<dbReference type="InterPro" id="IPR013546">
    <property type="entry name" value="PII_UdlTrfase/GS_AdlTrfase"/>
</dbReference>
<dbReference type="InterPro" id="IPR002934">
    <property type="entry name" value="Polymerase_NTP_transf_dom"/>
</dbReference>
<dbReference type="InterPro" id="IPR010043">
    <property type="entry name" value="UTase/UR"/>
</dbReference>
<dbReference type="NCBIfam" id="NF001366">
    <property type="entry name" value="PRK00275.1"/>
    <property type="match status" value="1"/>
</dbReference>
<dbReference type="NCBIfam" id="TIGR01693">
    <property type="entry name" value="UTase_glnD"/>
    <property type="match status" value="1"/>
</dbReference>
<dbReference type="PANTHER" id="PTHR47320">
    <property type="entry name" value="BIFUNCTIONAL URIDYLYLTRANSFERASE/URIDYLYL-REMOVING ENZYME"/>
    <property type="match status" value="1"/>
</dbReference>
<dbReference type="PANTHER" id="PTHR47320:SF1">
    <property type="entry name" value="BIFUNCTIONAL URIDYLYLTRANSFERASE_URIDYLYL-REMOVING ENZYME"/>
    <property type="match status" value="1"/>
</dbReference>
<dbReference type="Pfam" id="PF01842">
    <property type="entry name" value="ACT"/>
    <property type="match status" value="1"/>
</dbReference>
<dbReference type="Pfam" id="PF08335">
    <property type="entry name" value="GlnD_UR_UTase"/>
    <property type="match status" value="1"/>
</dbReference>
<dbReference type="Pfam" id="PF01966">
    <property type="entry name" value="HD"/>
    <property type="match status" value="1"/>
</dbReference>
<dbReference type="Pfam" id="PF01909">
    <property type="entry name" value="NTP_transf_2"/>
    <property type="match status" value="1"/>
</dbReference>
<dbReference type="PIRSF" id="PIRSF006288">
    <property type="entry name" value="PII_uridyltransf"/>
    <property type="match status" value="1"/>
</dbReference>
<dbReference type="SMART" id="SM00471">
    <property type="entry name" value="HDc"/>
    <property type="match status" value="1"/>
</dbReference>
<dbReference type="SUPFAM" id="SSF55021">
    <property type="entry name" value="ACT-like"/>
    <property type="match status" value="2"/>
</dbReference>
<dbReference type="SUPFAM" id="SSF109604">
    <property type="entry name" value="HD-domain/PDEase-like"/>
    <property type="match status" value="1"/>
</dbReference>
<dbReference type="SUPFAM" id="SSF81301">
    <property type="entry name" value="Nucleotidyltransferase"/>
    <property type="match status" value="1"/>
</dbReference>
<dbReference type="SUPFAM" id="SSF81593">
    <property type="entry name" value="Nucleotidyltransferase substrate binding subunit/domain"/>
    <property type="match status" value="1"/>
</dbReference>
<dbReference type="PROSITE" id="PS51671">
    <property type="entry name" value="ACT"/>
    <property type="match status" value="2"/>
</dbReference>
<dbReference type="PROSITE" id="PS51831">
    <property type="entry name" value="HD"/>
    <property type="match status" value="1"/>
</dbReference>
<proteinExistence type="inferred from homology"/>
<keyword id="KW-0378">Hydrolase</keyword>
<keyword id="KW-0460">Magnesium</keyword>
<keyword id="KW-0511">Multifunctional enzyme</keyword>
<keyword id="KW-0548">Nucleotidyltransferase</keyword>
<keyword id="KW-0677">Repeat</keyword>
<keyword id="KW-0808">Transferase</keyword>
<comment type="function">
    <text evidence="1">Modifies, by uridylylation and deuridylylation, the PII regulatory proteins (GlnB and homologs), in response to the nitrogen status of the cell that GlnD senses through the glutamine level. Under low glutamine levels, catalyzes the conversion of the PII proteins and UTP to PII-UMP and PPi, while under higher glutamine levels, GlnD hydrolyzes PII-UMP to PII and UMP (deuridylylation). Thus, controls uridylylation state and activity of the PII proteins, and plays an important role in the regulation of nitrogen assimilation and metabolism.</text>
</comment>
<comment type="catalytic activity">
    <reaction evidence="1">
        <text>[protein-PII]-L-tyrosine + UTP = [protein-PII]-uridylyl-L-tyrosine + diphosphate</text>
        <dbReference type="Rhea" id="RHEA:13673"/>
        <dbReference type="Rhea" id="RHEA-COMP:12147"/>
        <dbReference type="Rhea" id="RHEA-COMP:12148"/>
        <dbReference type="ChEBI" id="CHEBI:33019"/>
        <dbReference type="ChEBI" id="CHEBI:46398"/>
        <dbReference type="ChEBI" id="CHEBI:46858"/>
        <dbReference type="ChEBI" id="CHEBI:90602"/>
        <dbReference type="EC" id="2.7.7.59"/>
    </reaction>
</comment>
<comment type="catalytic activity">
    <reaction evidence="1">
        <text>[protein-PII]-uridylyl-L-tyrosine + H2O = [protein-PII]-L-tyrosine + UMP + H(+)</text>
        <dbReference type="Rhea" id="RHEA:48600"/>
        <dbReference type="Rhea" id="RHEA-COMP:12147"/>
        <dbReference type="Rhea" id="RHEA-COMP:12148"/>
        <dbReference type="ChEBI" id="CHEBI:15377"/>
        <dbReference type="ChEBI" id="CHEBI:15378"/>
        <dbReference type="ChEBI" id="CHEBI:46858"/>
        <dbReference type="ChEBI" id="CHEBI:57865"/>
        <dbReference type="ChEBI" id="CHEBI:90602"/>
    </reaction>
</comment>
<comment type="cofactor">
    <cofactor evidence="1">
        <name>Mg(2+)</name>
        <dbReference type="ChEBI" id="CHEBI:18420"/>
    </cofactor>
</comment>
<comment type="activity regulation">
    <text evidence="1">Uridylyltransferase (UTase) activity is inhibited by glutamine, while glutamine activates uridylyl-removing (UR) activity.</text>
</comment>
<comment type="domain">
    <text evidence="1">Has four distinct domains: an N-terminal nucleotidyltransferase (NT) domain responsible for UTase activity, a central HD domain that encodes UR activity, and two C-terminal ACT domains that seem to have a role in glutamine sensing.</text>
</comment>
<comment type="similarity">
    <text evidence="1">Belongs to the GlnD family.</text>
</comment>
<evidence type="ECO:0000255" key="1">
    <source>
        <dbReference type="HAMAP-Rule" id="MF_00277"/>
    </source>
</evidence>
<evidence type="ECO:0000255" key="2">
    <source>
        <dbReference type="PROSITE-ProRule" id="PRU01175"/>
    </source>
</evidence>
<name>GLND_PSEPG</name>
<sequence>MPQVDPELFDRGQFQAELALKASPIAAFKKAIRLAGEVLDKRFRAGSEIRPLIEARAWLVDNILQQAWNQFDWGDQSGIALVAVGGYGRGELHPHSDIDLLILLGAAEHEQYRDAIERFLTLLWDIGLEVGQSVRTVDECAEQARADLTVITNLMESRTICGPEALRQRMLEVTSTAHMWPSKEFFLAKRAELKARHHKYNDTEYNLEPNVKGSPGGLRDIQTVLWVARRQYGTLNLHALAGEGFLLESENELLASSQDFLWKVRYALHMLAGRAEDRLLFDHQRSLATLLGYGDDNPKRAIEQFMQQYYRVVMSISQLCDLIVQHFEEVILADEESGSTQPLNARFRLHDGYIEAANPNVFKRTPFAMLEIFVLMAQRPEIKGVRADTVRLLREHRHLIDDTFRTDIRNTSLFIELFKCEIGIHRNLRRMNRYGILGRYLPEFGLIVGQMQHDLFHIYTVDAHTLNLIKHLRKLQYTPVSEKFPLASKLMGRLPKPELIYLAGLYHDIGKGRQGDHSEIGAVDAQKFCERHQLPAWDSRLIVWLVQNHLVMSTTAQRKDLSDPQVINDFALHVGDETRLDYLYVLTVADINATNPSLWNSWRASLLRQLYTETKRALRRGLENPLDREEQIRQTQSSALDILVREGTDPDDVEQLWSQLGDDYFLKHNAADVAWHTDAILQQPADGGPLVLIKETTQREFEGGTQIFIYAPDQHDFFAVTVAAMSQLNLNIHDARIITSSSQFTLDTYIVLDNDGGSIGDNPQRVKQIRDGLTEALRNPEDYPTIIQRRVPRQLKHFDFPPQVTILNDAQRPVTILEITAPDRPGLLARLGRIFLEFDLSLQNAKIATLGERVEDVFFITDADNQPLSDPQLCSRLQEAIVQQLQAGQGSDTSPTRVTF</sequence>
<organism>
    <name type="scientific">Pseudomonas putida (strain GB-1)</name>
    <dbReference type="NCBI Taxonomy" id="76869"/>
    <lineage>
        <taxon>Bacteria</taxon>
        <taxon>Pseudomonadati</taxon>
        <taxon>Pseudomonadota</taxon>
        <taxon>Gammaproteobacteria</taxon>
        <taxon>Pseudomonadales</taxon>
        <taxon>Pseudomonadaceae</taxon>
        <taxon>Pseudomonas</taxon>
    </lineage>
</organism>
<accession>B0KS97</accession>
<gene>
    <name evidence="1" type="primary">glnD</name>
    <name type="ordered locus">PputGB1_1144</name>
</gene>